<name>RISB_CHLP8</name>
<accession>B3QL67</accession>
<comment type="function">
    <text evidence="1">Catalyzes the formation of 6,7-dimethyl-8-ribityllumazine by condensation of 5-amino-6-(D-ribitylamino)uracil with 3,4-dihydroxy-2-butanone 4-phosphate. This is the penultimate step in the biosynthesis of riboflavin.</text>
</comment>
<comment type="catalytic activity">
    <reaction evidence="1">
        <text>(2S)-2-hydroxy-3-oxobutyl phosphate + 5-amino-6-(D-ribitylamino)uracil = 6,7-dimethyl-8-(1-D-ribityl)lumazine + phosphate + 2 H2O + H(+)</text>
        <dbReference type="Rhea" id="RHEA:26152"/>
        <dbReference type="ChEBI" id="CHEBI:15377"/>
        <dbReference type="ChEBI" id="CHEBI:15378"/>
        <dbReference type="ChEBI" id="CHEBI:15934"/>
        <dbReference type="ChEBI" id="CHEBI:43474"/>
        <dbReference type="ChEBI" id="CHEBI:58201"/>
        <dbReference type="ChEBI" id="CHEBI:58830"/>
        <dbReference type="EC" id="2.5.1.78"/>
    </reaction>
</comment>
<comment type="pathway">
    <text evidence="1">Cofactor biosynthesis; riboflavin biosynthesis; riboflavin from 2-hydroxy-3-oxobutyl phosphate and 5-amino-6-(D-ribitylamino)uracil: step 1/2.</text>
</comment>
<comment type="similarity">
    <text evidence="1">Belongs to the DMRL synthase family.</text>
</comment>
<gene>
    <name evidence="1" type="primary">ribH</name>
    <name type="ordered locus">Cpar_1913</name>
</gene>
<dbReference type="EC" id="2.5.1.78" evidence="1"/>
<dbReference type="EMBL" id="CP001099">
    <property type="protein sequence ID" value="ACF12305.1"/>
    <property type="molecule type" value="Genomic_DNA"/>
</dbReference>
<dbReference type="RefSeq" id="WP_012503138.1">
    <property type="nucleotide sequence ID" value="NC_011027.1"/>
</dbReference>
<dbReference type="SMR" id="B3QL67"/>
<dbReference type="STRING" id="517417.Cpar_1913"/>
<dbReference type="KEGG" id="cpc:Cpar_1913"/>
<dbReference type="eggNOG" id="COG0054">
    <property type="taxonomic scope" value="Bacteria"/>
</dbReference>
<dbReference type="HOGENOM" id="CLU_089358_1_1_10"/>
<dbReference type="OrthoDB" id="9809709at2"/>
<dbReference type="UniPathway" id="UPA00275">
    <property type="reaction ID" value="UER00404"/>
</dbReference>
<dbReference type="Proteomes" id="UP000008811">
    <property type="component" value="Chromosome"/>
</dbReference>
<dbReference type="GO" id="GO:0005829">
    <property type="term" value="C:cytosol"/>
    <property type="evidence" value="ECO:0007669"/>
    <property type="project" value="TreeGrafter"/>
</dbReference>
<dbReference type="GO" id="GO:0009349">
    <property type="term" value="C:riboflavin synthase complex"/>
    <property type="evidence" value="ECO:0007669"/>
    <property type="project" value="InterPro"/>
</dbReference>
<dbReference type="GO" id="GO:0000906">
    <property type="term" value="F:6,7-dimethyl-8-ribityllumazine synthase activity"/>
    <property type="evidence" value="ECO:0007669"/>
    <property type="project" value="UniProtKB-UniRule"/>
</dbReference>
<dbReference type="GO" id="GO:0009231">
    <property type="term" value="P:riboflavin biosynthetic process"/>
    <property type="evidence" value="ECO:0007669"/>
    <property type="project" value="UniProtKB-UniRule"/>
</dbReference>
<dbReference type="CDD" id="cd09209">
    <property type="entry name" value="Lumazine_synthase-I"/>
    <property type="match status" value="1"/>
</dbReference>
<dbReference type="FunFam" id="3.40.50.960:FF:000001">
    <property type="entry name" value="6,7-dimethyl-8-ribityllumazine synthase"/>
    <property type="match status" value="1"/>
</dbReference>
<dbReference type="Gene3D" id="3.40.50.960">
    <property type="entry name" value="Lumazine/riboflavin synthase"/>
    <property type="match status" value="1"/>
</dbReference>
<dbReference type="HAMAP" id="MF_00178">
    <property type="entry name" value="Lumazine_synth"/>
    <property type="match status" value="1"/>
</dbReference>
<dbReference type="InterPro" id="IPR034964">
    <property type="entry name" value="LS"/>
</dbReference>
<dbReference type="InterPro" id="IPR002180">
    <property type="entry name" value="LS/RS"/>
</dbReference>
<dbReference type="InterPro" id="IPR036467">
    <property type="entry name" value="LS/RS_sf"/>
</dbReference>
<dbReference type="NCBIfam" id="TIGR00114">
    <property type="entry name" value="lumazine-synth"/>
    <property type="match status" value="1"/>
</dbReference>
<dbReference type="NCBIfam" id="NF000812">
    <property type="entry name" value="PRK00061.1-4"/>
    <property type="match status" value="1"/>
</dbReference>
<dbReference type="PANTHER" id="PTHR21058:SF0">
    <property type="entry name" value="6,7-DIMETHYL-8-RIBITYLLUMAZINE SYNTHASE"/>
    <property type="match status" value="1"/>
</dbReference>
<dbReference type="PANTHER" id="PTHR21058">
    <property type="entry name" value="6,7-DIMETHYL-8-RIBITYLLUMAZINE SYNTHASE DMRL SYNTHASE LUMAZINE SYNTHASE"/>
    <property type="match status" value="1"/>
</dbReference>
<dbReference type="Pfam" id="PF00885">
    <property type="entry name" value="DMRL_synthase"/>
    <property type="match status" value="1"/>
</dbReference>
<dbReference type="SUPFAM" id="SSF52121">
    <property type="entry name" value="Lumazine synthase"/>
    <property type="match status" value="1"/>
</dbReference>
<sequence length="156" mass="16494">MQVQNIEGTLTAQGIRFGLVVSRFNDFIGQKLVEGAIDCIVRHGGSADNITVIRCPGAFELPSVTRKAAMSGKFDAMITLGVIIRGSTPHFDVIAAEATKGIAQVGLETMIPITFGVLTTENLEQAIERAGTKAGNKGFDAALGAIEMVNLYKQLG</sequence>
<organism>
    <name type="scientific">Chlorobaculum parvum (strain DSM 263 / NCIMB 8327)</name>
    <name type="common">Chlorobium vibrioforme subsp. thiosulfatophilum</name>
    <dbReference type="NCBI Taxonomy" id="517417"/>
    <lineage>
        <taxon>Bacteria</taxon>
        <taxon>Pseudomonadati</taxon>
        <taxon>Chlorobiota</taxon>
        <taxon>Chlorobiia</taxon>
        <taxon>Chlorobiales</taxon>
        <taxon>Chlorobiaceae</taxon>
        <taxon>Chlorobaculum</taxon>
    </lineage>
</organism>
<feature type="chain" id="PRO_1000098171" description="6,7-dimethyl-8-ribityllumazine synthase">
    <location>
        <begin position="1"/>
        <end position="156"/>
    </location>
</feature>
<feature type="active site" description="Proton donor" evidence="1">
    <location>
        <position position="90"/>
    </location>
</feature>
<feature type="binding site" evidence="1">
    <location>
        <position position="24"/>
    </location>
    <ligand>
        <name>5-amino-6-(D-ribitylamino)uracil</name>
        <dbReference type="ChEBI" id="CHEBI:15934"/>
    </ligand>
</feature>
<feature type="binding site" evidence="1">
    <location>
        <begin position="58"/>
        <end position="60"/>
    </location>
    <ligand>
        <name>5-amino-6-(D-ribitylamino)uracil</name>
        <dbReference type="ChEBI" id="CHEBI:15934"/>
    </ligand>
</feature>
<feature type="binding site" evidence="1">
    <location>
        <begin position="82"/>
        <end position="84"/>
    </location>
    <ligand>
        <name>5-amino-6-(D-ribitylamino)uracil</name>
        <dbReference type="ChEBI" id="CHEBI:15934"/>
    </ligand>
</feature>
<feature type="binding site" evidence="1">
    <location>
        <begin position="87"/>
        <end position="88"/>
    </location>
    <ligand>
        <name>(2S)-2-hydroxy-3-oxobutyl phosphate</name>
        <dbReference type="ChEBI" id="CHEBI:58830"/>
    </ligand>
</feature>
<feature type="binding site" evidence="1">
    <location>
        <position position="115"/>
    </location>
    <ligand>
        <name>5-amino-6-(D-ribitylamino)uracil</name>
        <dbReference type="ChEBI" id="CHEBI:15934"/>
    </ligand>
</feature>
<feature type="binding site" evidence="1">
    <location>
        <position position="129"/>
    </location>
    <ligand>
        <name>(2S)-2-hydroxy-3-oxobutyl phosphate</name>
        <dbReference type="ChEBI" id="CHEBI:58830"/>
    </ligand>
</feature>
<proteinExistence type="inferred from homology"/>
<protein>
    <recommendedName>
        <fullName evidence="1">6,7-dimethyl-8-ribityllumazine synthase</fullName>
        <shortName evidence="1">DMRL synthase</shortName>
        <shortName evidence="1">LS</shortName>
        <shortName evidence="1">Lumazine synthase</shortName>
        <ecNumber evidence="1">2.5.1.78</ecNumber>
    </recommendedName>
</protein>
<reference key="1">
    <citation type="submission" date="2008-06" db="EMBL/GenBank/DDBJ databases">
        <title>Complete sequence of Chlorobaculum parvum NCIB 8327.</title>
        <authorList>
            <consortium name="US DOE Joint Genome Institute"/>
            <person name="Lucas S."/>
            <person name="Copeland A."/>
            <person name="Lapidus A."/>
            <person name="Glavina del Rio T."/>
            <person name="Dalin E."/>
            <person name="Tice H."/>
            <person name="Bruce D."/>
            <person name="Goodwin L."/>
            <person name="Pitluck S."/>
            <person name="Schmutz J."/>
            <person name="Larimer F."/>
            <person name="Land M."/>
            <person name="Hauser L."/>
            <person name="Kyrpides N."/>
            <person name="Mikhailova N."/>
            <person name="Zhao F."/>
            <person name="Li T."/>
            <person name="Liu Z."/>
            <person name="Overmann J."/>
            <person name="Bryant D.A."/>
            <person name="Richardson P."/>
        </authorList>
    </citation>
    <scope>NUCLEOTIDE SEQUENCE [LARGE SCALE GENOMIC DNA]</scope>
    <source>
        <strain>DSM 263 / NCIMB 8327</strain>
    </source>
</reference>
<keyword id="KW-0686">Riboflavin biosynthesis</keyword>
<keyword id="KW-0808">Transferase</keyword>
<evidence type="ECO:0000255" key="1">
    <source>
        <dbReference type="HAMAP-Rule" id="MF_00178"/>
    </source>
</evidence>